<accession>Q3YRL7</accession>
<gene>
    <name evidence="1" type="primary">rpmC</name>
    <name type="ordered locus">Ecaj_0604</name>
</gene>
<sequence length="67" mass="7891">MDIVDIRSKTSDELRELLASLRKELVDAVLNRKIDKSGNHFYCVNIKRDIARVLTVLNERKKEERHV</sequence>
<reference key="1">
    <citation type="journal article" date="2006" name="J. Bacteriol.">
        <title>The genome of the obligately intracellular bacterium Ehrlichia canis reveals themes of complex membrane structure and immune evasion strategies.</title>
        <authorList>
            <person name="Mavromatis K."/>
            <person name="Doyle C.K."/>
            <person name="Lykidis A."/>
            <person name="Ivanova N."/>
            <person name="Francino M.P."/>
            <person name="Chain P."/>
            <person name="Shin M."/>
            <person name="Malfatti S."/>
            <person name="Larimer F."/>
            <person name="Copeland A."/>
            <person name="Detter J.C."/>
            <person name="Land M."/>
            <person name="Richardson P.M."/>
            <person name="Yu X.J."/>
            <person name="Walker D.H."/>
            <person name="McBride J.W."/>
            <person name="Kyrpides N.C."/>
        </authorList>
    </citation>
    <scope>NUCLEOTIDE SEQUENCE [LARGE SCALE GENOMIC DNA]</scope>
    <source>
        <strain>Jake</strain>
    </source>
</reference>
<keyword id="KW-0687">Ribonucleoprotein</keyword>
<keyword id="KW-0689">Ribosomal protein</keyword>
<dbReference type="EMBL" id="CP000107">
    <property type="protein sequence ID" value="AAZ68638.1"/>
    <property type="molecule type" value="Genomic_DNA"/>
</dbReference>
<dbReference type="RefSeq" id="WP_011304716.1">
    <property type="nucleotide sequence ID" value="NC_007354.1"/>
</dbReference>
<dbReference type="SMR" id="Q3YRL7"/>
<dbReference type="STRING" id="269484.Ecaj_0604"/>
<dbReference type="KEGG" id="ecn:Ecaj_0604"/>
<dbReference type="eggNOG" id="COG0255">
    <property type="taxonomic scope" value="Bacteria"/>
</dbReference>
<dbReference type="HOGENOM" id="CLU_158491_4_0_5"/>
<dbReference type="InParanoid" id="Q3YRL7"/>
<dbReference type="Proteomes" id="UP000000435">
    <property type="component" value="Chromosome"/>
</dbReference>
<dbReference type="GO" id="GO:1990904">
    <property type="term" value="C:ribonucleoprotein complex"/>
    <property type="evidence" value="ECO:0007669"/>
    <property type="project" value="UniProtKB-KW"/>
</dbReference>
<dbReference type="GO" id="GO:0005840">
    <property type="term" value="C:ribosome"/>
    <property type="evidence" value="ECO:0007669"/>
    <property type="project" value="UniProtKB-KW"/>
</dbReference>
<dbReference type="GO" id="GO:0003735">
    <property type="term" value="F:structural constituent of ribosome"/>
    <property type="evidence" value="ECO:0007669"/>
    <property type="project" value="InterPro"/>
</dbReference>
<dbReference type="GO" id="GO:0006412">
    <property type="term" value="P:translation"/>
    <property type="evidence" value="ECO:0007669"/>
    <property type="project" value="UniProtKB-UniRule"/>
</dbReference>
<dbReference type="CDD" id="cd00427">
    <property type="entry name" value="Ribosomal_L29_HIP"/>
    <property type="match status" value="1"/>
</dbReference>
<dbReference type="Gene3D" id="1.10.287.310">
    <property type="match status" value="1"/>
</dbReference>
<dbReference type="HAMAP" id="MF_00374">
    <property type="entry name" value="Ribosomal_uL29"/>
    <property type="match status" value="1"/>
</dbReference>
<dbReference type="InterPro" id="IPR001854">
    <property type="entry name" value="Ribosomal_uL29"/>
</dbReference>
<dbReference type="InterPro" id="IPR036049">
    <property type="entry name" value="Ribosomal_uL29_sf"/>
</dbReference>
<dbReference type="NCBIfam" id="TIGR00012">
    <property type="entry name" value="L29"/>
    <property type="match status" value="1"/>
</dbReference>
<dbReference type="Pfam" id="PF00831">
    <property type="entry name" value="Ribosomal_L29"/>
    <property type="match status" value="1"/>
</dbReference>
<dbReference type="SUPFAM" id="SSF46561">
    <property type="entry name" value="Ribosomal protein L29 (L29p)"/>
    <property type="match status" value="1"/>
</dbReference>
<name>RL29_EHRCJ</name>
<evidence type="ECO:0000255" key="1">
    <source>
        <dbReference type="HAMAP-Rule" id="MF_00374"/>
    </source>
</evidence>
<evidence type="ECO:0000305" key="2"/>
<feature type="chain" id="PRO_1000007478" description="Large ribosomal subunit protein uL29">
    <location>
        <begin position="1"/>
        <end position="67"/>
    </location>
</feature>
<comment type="similarity">
    <text evidence="1">Belongs to the universal ribosomal protein uL29 family.</text>
</comment>
<organism>
    <name type="scientific">Ehrlichia canis (strain Jake)</name>
    <dbReference type="NCBI Taxonomy" id="269484"/>
    <lineage>
        <taxon>Bacteria</taxon>
        <taxon>Pseudomonadati</taxon>
        <taxon>Pseudomonadota</taxon>
        <taxon>Alphaproteobacteria</taxon>
        <taxon>Rickettsiales</taxon>
        <taxon>Anaplasmataceae</taxon>
        <taxon>Ehrlichia</taxon>
    </lineage>
</organism>
<proteinExistence type="inferred from homology"/>
<protein>
    <recommendedName>
        <fullName evidence="1">Large ribosomal subunit protein uL29</fullName>
    </recommendedName>
    <alternativeName>
        <fullName evidence="2">50S ribosomal protein L29</fullName>
    </alternativeName>
</protein>